<name>ASTA_ECOL5</name>
<comment type="function">
    <text evidence="1">Catalyzes the transfer of succinyl-CoA to arginine to produce N(2)-succinylarginine.</text>
</comment>
<comment type="catalytic activity">
    <reaction evidence="1">
        <text>succinyl-CoA + L-arginine = N(2)-succinyl-L-arginine + CoA + H(+)</text>
        <dbReference type="Rhea" id="RHEA:15185"/>
        <dbReference type="ChEBI" id="CHEBI:15378"/>
        <dbReference type="ChEBI" id="CHEBI:32682"/>
        <dbReference type="ChEBI" id="CHEBI:57287"/>
        <dbReference type="ChEBI" id="CHEBI:57292"/>
        <dbReference type="ChEBI" id="CHEBI:58241"/>
        <dbReference type="EC" id="2.3.1.109"/>
    </reaction>
</comment>
<comment type="pathway">
    <text evidence="1">Amino-acid degradation; L-arginine degradation via AST pathway; L-glutamate and succinate from L-arginine: step 1/5.</text>
</comment>
<comment type="similarity">
    <text evidence="1">Belongs to the arginine N-succinyltransferase family.</text>
</comment>
<proteinExistence type="inferred from homology"/>
<sequence>MMVIRPVERSDVSELMQLASKTGGGLTSLPANEATLSVRIERAIKTWQGELPKSEQGYVFVLEDSETGTVAGICAIEVAVGLNDPWYNYRVGTLVHASKELNVYNALPTLFLSNDHTGSSELCTLFLDPEWRKEGNGYLLSKSRFMFMAAFRDKFNDKVVAEMRGVIDEHGYSPFWQSLGKRFFSMDFSRADFLCGTGQKAFIAELMPKHPIYTHFLSQEAQDVIGQVHPQTAPARAVLEKEGFRYRNYIDIFDGGPTLECDIDRVRAIRKSRLVEVAEGQPAQGDFPACLVANENYHHFRVVLVRTDPATERLILTAAQLDALKCHAGDRVRLVRLCAEEKTA</sequence>
<protein>
    <recommendedName>
        <fullName evidence="1">Arginine N-succinyltransferase</fullName>
        <shortName evidence="1">AST</shortName>
        <ecNumber evidence="1">2.3.1.109</ecNumber>
    </recommendedName>
    <alternativeName>
        <fullName evidence="1">AOST</fullName>
    </alternativeName>
</protein>
<reference key="1">
    <citation type="journal article" date="2006" name="Mol. Microbiol.">
        <title>Role of pathogenicity island-associated integrases in the genome plasticity of uropathogenic Escherichia coli strain 536.</title>
        <authorList>
            <person name="Hochhut B."/>
            <person name="Wilde C."/>
            <person name="Balling G."/>
            <person name="Middendorf B."/>
            <person name="Dobrindt U."/>
            <person name="Brzuszkiewicz E."/>
            <person name="Gottschalk G."/>
            <person name="Carniel E."/>
            <person name="Hacker J."/>
        </authorList>
    </citation>
    <scope>NUCLEOTIDE SEQUENCE [LARGE SCALE GENOMIC DNA]</scope>
    <source>
        <strain>536 / UPEC</strain>
    </source>
</reference>
<accession>Q0TH83</accession>
<keyword id="KW-0012">Acyltransferase</keyword>
<keyword id="KW-0056">Arginine metabolism</keyword>
<keyword id="KW-0808">Transferase</keyword>
<feature type="chain" id="PRO_0000262323" description="Arginine N-succinyltransferase">
    <location>
        <begin position="1"/>
        <end position="344"/>
    </location>
</feature>
<feature type="active site" description="Proton donor" evidence="1">
    <location>
        <position position="229"/>
    </location>
</feature>
<feature type="binding site" evidence="1">
    <location>
        <position position="125"/>
    </location>
    <ligand>
        <name>succinyl-CoA</name>
        <dbReference type="ChEBI" id="CHEBI:57292"/>
    </ligand>
</feature>
<evidence type="ECO:0000255" key="1">
    <source>
        <dbReference type="HAMAP-Rule" id="MF_01171"/>
    </source>
</evidence>
<dbReference type="EC" id="2.3.1.109" evidence="1"/>
<dbReference type="EMBL" id="CP000247">
    <property type="protein sequence ID" value="ABG69696.1"/>
    <property type="molecule type" value="Genomic_DNA"/>
</dbReference>
<dbReference type="RefSeq" id="WP_000989445.1">
    <property type="nucleotide sequence ID" value="NC_008253.1"/>
</dbReference>
<dbReference type="SMR" id="Q0TH83"/>
<dbReference type="KEGG" id="ecp:ECP_1693"/>
<dbReference type="HOGENOM" id="CLU_057655_0_0_6"/>
<dbReference type="UniPathway" id="UPA00185">
    <property type="reaction ID" value="UER00279"/>
</dbReference>
<dbReference type="Proteomes" id="UP000009182">
    <property type="component" value="Chromosome"/>
</dbReference>
<dbReference type="GO" id="GO:0008791">
    <property type="term" value="F:arginine N-succinyltransferase activity"/>
    <property type="evidence" value="ECO:0007669"/>
    <property type="project" value="UniProtKB-UniRule"/>
</dbReference>
<dbReference type="GO" id="GO:0019544">
    <property type="term" value="P:arginine catabolic process to glutamate"/>
    <property type="evidence" value="ECO:0007669"/>
    <property type="project" value="UniProtKB-UniRule"/>
</dbReference>
<dbReference type="GO" id="GO:0019545">
    <property type="term" value="P:arginine catabolic process to succinate"/>
    <property type="evidence" value="ECO:0007669"/>
    <property type="project" value="UniProtKB-UniRule"/>
</dbReference>
<dbReference type="Gene3D" id="2.40.40.20">
    <property type="match status" value="1"/>
</dbReference>
<dbReference type="HAMAP" id="MF_01171">
    <property type="entry name" value="AstA"/>
    <property type="match status" value="1"/>
</dbReference>
<dbReference type="InterPro" id="IPR016181">
    <property type="entry name" value="Acyl_CoA_acyltransferase"/>
</dbReference>
<dbReference type="InterPro" id="IPR007041">
    <property type="entry name" value="Arg_succinylTrfase_AstA/AruG"/>
</dbReference>
<dbReference type="InterPro" id="IPR017650">
    <property type="entry name" value="Arginine_N-succinylTrfase"/>
</dbReference>
<dbReference type="NCBIfam" id="TIGR03243">
    <property type="entry name" value="arg_catab_AOST"/>
    <property type="match status" value="1"/>
</dbReference>
<dbReference type="NCBIfam" id="TIGR03244">
    <property type="entry name" value="arg_catab_AstA"/>
    <property type="match status" value="1"/>
</dbReference>
<dbReference type="NCBIfam" id="NF007770">
    <property type="entry name" value="PRK10456.1"/>
    <property type="match status" value="1"/>
</dbReference>
<dbReference type="PANTHER" id="PTHR30420:SF1">
    <property type="entry name" value="ARGININE N-SUCCINYLTRANSFERASE"/>
    <property type="match status" value="1"/>
</dbReference>
<dbReference type="PANTHER" id="PTHR30420">
    <property type="entry name" value="N-SUCCINYLARGININE DIHYDROLASE"/>
    <property type="match status" value="1"/>
</dbReference>
<dbReference type="Pfam" id="PF04958">
    <property type="entry name" value="AstA"/>
    <property type="match status" value="1"/>
</dbReference>
<dbReference type="SUPFAM" id="SSF55729">
    <property type="entry name" value="Acyl-CoA N-acyltransferases (Nat)"/>
    <property type="match status" value="1"/>
</dbReference>
<organism>
    <name type="scientific">Escherichia coli O6:K15:H31 (strain 536 / UPEC)</name>
    <dbReference type="NCBI Taxonomy" id="362663"/>
    <lineage>
        <taxon>Bacteria</taxon>
        <taxon>Pseudomonadati</taxon>
        <taxon>Pseudomonadota</taxon>
        <taxon>Gammaproteobacteria</taxon>
        <taxon>Enterobacterales</taxon>
        <taxon>Enterobacteriaceae</taxon>
        <taxon>Escherichia</taxon>
    </lineage>
</organism>
<gene>
    <name evidence="1" type="primary">astA</name>
    <name type="ordered locus">ECP_1693</name>
</gene>